<protein>
    <recommendedName>
        <fullName>Borealin</fullName>
    </recommendedName>
    <alternativeName>
        <fullName>Aurora borealis protein</fullName>
    </alternativeName>
    <alternativeName>
        <fullName>Borealin-related</fullName>
    </alternativeName>
</protein>
<feature type="chain" id="PRO_0000247083" description="Borealin">
    <location>
        <begin position="1"/>
        <end position="315"/>
    </location>
</feature>
<feature type="region of interest" description="Disordered" evidence="1">
    <location>
        <begin position="103"/>
        <end position="126"/>
    </location>
</feature>
<feature type="region of interest" description="Disordered" evidence="1">
    <location>
        <begin position="138"/>
        <end position="226"/>
    </location>
</feature>
<feature type="compositionally biased region" description="Basic residues" evidence="1">
    <location>
        <begin position="153"/>
        <end position="162"/>
    </location>
</feature>
<feature type="compositionally biased region" description="Low complexity" evidence="1">
    <location>
        <begin position="178"/>
        <end position="188"/>
    </location>
</feature>
<feature type="modified residue" description="Phosphothreonine" evidence="3">
    <location>
        <position position="146"/>
    </location>
</feature>
<feature type="modified residue" description="Phosphoserine" evidence="3">
    <location>
        <position position="152"/>
    </location>
</feature>
<feature type="modified residue" description="Phosphoserine" evidence="3">
    <location>
        <position position="163"/>
    </location>
</feature>
<feature type="modified residue" description="Phosphoserine" evidence="3">
    <location>
        <position position="205"/>
    </location>
</feature>
<feature type="modified residue" description="Phosphothreonine" evidence="3">
    <location>
        <position position="209"/>
    </location>
</feature>
<feature type="modified residue" description="Phosphoserine" evidence="3">
    <location>
        <position position="218"/>
    </location>
</feature>
<feature type="modified residue" description="Phosphoserine" evidence="3">
    <location>
        <position position="220"/>
    </location>
</feature>
<feature type="modified residue" description="Phosphoserine" evidence="3">
    <location>
        <position position="244"/>
    </location>
</feature>
<feature type="splice variant" id="VSP_019925" description="In isoform B." evidence="4">
    <original>E</original>
    <variation>EGYLT</variation>
    <location>
        <position position="117"/>
    </location>
</feature>
<name>BOREA_DROME</name>
<keyword id="KW-0025">Alternative splicing</keyword>
<keyword id="KW-0131">Cell cycle</keyword>
<keyword id="KW-0132">Cell division</keyword>
<keyword id="KW-0137">Centromere</keyword>
<keyword id="KW-0158">Chromosome</keyword>
<keyword id="KW-0963">Cytoplasm</keyword>
<keyword id="KW-0206">Cytoskeleton</keyword>
<keyword id="KW-0498">Mitosis</keyword>
<keyword id="KW-0539">Nucleus</keyword>
<keyword id="KW-0597">Phosphoprotein</keyword>
<keyword id="KW-1185">Reference proteome</keyword>
<evidence type="ECO:0000256" key="1">
    <source>
        <dbReference type="SAM" id="MobiDB-lite"/>
    </source>
</evidence>
<evidence type="ECO:0000269" key="2">
    <source>
    </source>
</evidence>
<evidence type="ECO:0000269" key="3">
    <source>
    </source>
</evidence>
<evidence type="ECO:0000303" key="4">
    <source>
    </source>
</evidence>
<evidence type="ECO:0000305" key="5"/>
<comment type="function">
    <text evidence="2">Component of the chromosomal passenger complex (CPC), a complex that acts as a key regulator of embryonic mitosis. The CPC complex has essential functions at the centromere for ensuring sister chromatid cohesion, recruitment of the CPC to kinetochores, and chromosome alignment and segregation. There is no function in meiotic histone phosphorylation or spindle formation.</text>
</comment>
<comment type="subunit">
    <text>Component of the CPC complex.</text>
</comment>
<comment type="subcellular location">
    <subcellularLocation>
        <location evidence="2">Nucleus</location>
    </subcellularLocation>
    <subcellularLocation>
        <location evidence="2">Chromosome</location>
        <location evidence="2">Centromere</location>
    </subcellularLocation>
    <subcellularLocation>
        <location evidence="2">Cytoplasm</location>
        <location evidence="2">Cytoskeleton</location>
        <location evidence="2">Spindle</location>
    </subcellularLocation>
    <text>Localizes on chromosome arms and inner centromeres from prophase through metaphase and then transferring to the spindle midzone and midbody from anaphase through cytokinesis. Colocalizes with and is required for the correct localization of the CPC components Aurora B kinase and Incenp in mitotic cells. Is absent from spermatocytes undergoing meiosis.</text>
</comment>
<comment type="alternative products">
    <event type="alternative splicing"/>
    <isoform>
        <id>Q9VLD6-1</id>
        <name>A</name>
        <sequence type="displayed"/>
    </isoform>
    <isoform>
        <id>Q9VLD6-2</id>
        <name>B</name>
        <sequence type="described" ref="VSP_019925"/>
    </isoform>
</comment>
<comment type="tissue specificity">
    <text>Ubiquitously expressed in the early embryo. Expression is restricted to the ventral nerve cord and brain during later embryonic stages.</text>
</comment>
<comment type="disruption phenotype">
    <text evidence="2">Flies show multiple mitotic defects, including multipolar spindles that result in large polyploid cells and often in delayed apoptosis. The developmental consequences of these defects include cell-autonomous and non-autonomous defects in cell-type specification and tissue architecture. Flies also display a drastic decrease in histone H3 'Ser-10' phosphorylation, suggesting that the CPC complex mediates phosphorylation of 'Ser-10' of histone H3.</text>
</comment>
<comment type="similarity">
    <text evidence="5">Belongs to the borealin family.</text>
</comment>
<proteinExistence type="evidence at protein level"/>
<reference key="1">
    <citation type="journal article" date="2000" name="Science">
        <title>The genome sequence of Drosophila melanogaster.</title>
        <authorList>
            <person name="Adams M.D."/>
            <person name="Celniker S.E."/>
            <person name="Holt R.A."/>
            <person name="Evans C.A."/>
            <person name="Gocayne J.D."/>
            <person name="Amanatides P.G."/>
            <person name="Scherer S.E."/>
            <person name="Li P.W."/>
            <person name="Hoskins R.A."/>
            <person name="Galle R.F."/>
            <person name="George R.A."/>
            <person name="Lewis S.E."/>
            <person name="Richards S."/>
            <person name="Ashburner M."/>
            <person name="Henderson S.N."/>
            <person name="Sutton G.G."/>
            <person name="Wortman J.R."/>
            <person name="Yandell M.D."/>
            <person name="Zhang Q."/>
            <person name="Chen L.X."/>
            <person name="Brandon R.C."/>
            <person name="Rogers Y.-H.C."/>
            <person name="Blazej R.G."/>
            <person name="Champe M."/>
            <person name="Pfeiffer B.D."/>
            <person name="Wan K.H."/>
            <person name="Doyle C."/>
            <person name="Baxter E.G."/>
            <person name="Helt G."/>
            <person name="Nelson C.R."/>
            <person name="Miklos G.L.G."/>
            <person name="Abril J.F."/>
            <person name="Agbayani A."/>
            <person name="An H.-J."/>
            <person name="Andrews-Pfannkoch C."/>
            <person name="Baldwin D."/>
            <person name="Ballew R.M."/>
            <person name="Basu A."/>
            <person name="Baxendale J."/>
            <person name="Bayraktaroglu L."/>
            <person name="Beasley E.M."/>
            <person name="Beeson K.Y."/>
            <person name="Benos P.V."/>
            <person name="Berman B.P."/>
            <person name="Bhandari D."/>
            <person name="Bolshakov S."/>
            <person name="Borkova D."/>
            <person name="Botchan M.R."/>
            <person name="Bouck J."/>
            <person name="Brokstein P."/>
            <person name="Brottier P."/>
            <person name="Burtis K.C."/>
            <person name="Busam D.A."/>
            <person name="Butler H."/>
            <person name="Cadieu E."/>
            <person name="Center A."/>
            <person name="Chandra I."/>
            <person name="Cherry J.M."/>
            <person name="Cawley S."/>
            <person name="Dahlke C."/>
            <person name="Davenport L.B."/>
            <person name="Davies P."/>
            <person name="de Pablos B."/>
            <person name="Delcher A."/>
            <person name="Deng Z."/>
            <person name="Mays A.D."/>
            <person name="Dew I."/>
            <person name="Dietz S.M."/>
            <person name="Dodson K."/>
            <person name="Doup L.E."/>
            <person name="Downes M."/>
            <person name="Dugan-Rocha S."/>
            <person name="Dunkov B.C."/>
            <person name="Dunn P."/>
            <person name="Durbin K.J."/>
            <person name="Evangelista C.C."/>
            <person name="Ferraz C."/>
            <person name="Ferriera S."/>
            <person name="Fleischmann W."/>
            <person name="Fosler C."/>
            <person name="Gabrielian A.E."/>
            <person name="Garg N.S."/>
            <person name="Gelbart W.M."/>
            <person name="Glasser K."/>
            <person name="Glodek A."/>
            <person name="Gong F."/>
            <person name="Gorrell J.H."/>
            <person name="Gu Z."/>
            <person name="Guan P."/>
            <person name="Harris M."/>
            <person name="Harris N.L."/>
            <person name="Harvey D.A."/>
            <person name="Heiman T.J."/>
            <person name="Hernandez J.R."/>
            <person name="Houck J."/>
            <person name="Hostin D."/>
            <person name="Houston K.A."/>
            <person name="Howland T.J."/>
            <person name="Wei M.-H."/>
            <person name="Ibegwam C."/>
            <person name="Jalali M."/>
            <person name="Kalush F."/>
            <person name="Karpen G.H."/>
            <person name="Ke Z."/>
            <person name="Kennison J.A."/>
            <person name="Ketchum K.A."/>
            <person name="Kimmel B.E."/>
            <person name="Kodira C.D."/>
            <person name="Kraft C.L."/>
            <person name="Kravitz S."/>
            <person name="Kulp D."/>
            <person name="Lai Z."/>
            <person name="Lasko P."/>
            <person name="Lei Y."/>
            <person name="Levitsky A.A."/>
            <person name="Li J.H."/>
            <person name="Li Z."/>
            <person name="Liang Y."/>
            <person name="Lin X."/>
            <person name="Liu X."/>
            <person name="Mattei B."/>
            <person name="McIntosh T.C."/>
            <person name="McLeod M.P."/>
            <person name="McPherson D."/>
            <person name="Merkulov G."/>
            <person name="Milshina N.V."/>
            <person name="Mobarry C."/>
            <person name="Morris J."/>
            <person name="Moshrefi A."/>
            <person name="Mount S.M."/>
            <person name="Moy M."/>
            <person name="Murphy B."/>
            <person name="Murphy L."/>
            <person name="Muzny D.M."/>
            <person name="Nelson D.L."/>
            <person name="Nelson D.R."/>
            <person name="Nelson K.A."/>
            <person name="Nixon K."/>
            <person name="Nusskern D.R."/>
            <person name="Pacleb J.M."/>
            <person name="Palazzolo M."/>
            <person name="Pittman G.S."/>
            <person name="Pan S."/>
            <person name="Pollard J."/>
            <person name="Puri V."/>
            <person name="Reese M.G."/>
            <person name="Reinert K."/>
            <person name="Remington K."/>
            <person name="Saunders R.D.C."/>
            <person name="Scheeler F."/>
            <person name="Shen H."/>
            <person name="Shue B.C."/>
            <person name="Siden-Kiamos I."/>
            <person name="Simpson M."/>
            <person name="Skupski M.P."/>
            <person name="Smith T.J."/>
            <person name="Spier E."/>
            <person name="Spradling A.C."/>
            <person name="Stapleton M."/>
            <person name="Strong R."/>
            <person name="Sun E."/>
            <person name="Svirskas R."/>
            <person name="Tector C."/>
            <person name="Turner R."/>
            <person name="Venter E."/>
            <person name="Wang A.H."/>
            <person name="Wang X."/>
            <person name="Wang Z.-Y."/>
            <person name="Wassarman D.A."/>
            <person name="Weinstock G.M."/>
            <person name="Weissenbach J."/>
            <person name="Williams S.M."/>
            <person name="Woodage T."/>
            <person name="Worley K.C."/>
            <person name="Wu D."/>
            <person name="Yang S."/>
            <person name="Yao Q.A."/>
            <person name="Ye J."/>
            <person name="Yeh R.-F."/>
            <person name="Zaveri J.S."/>
            <person name="Zhan M."/>
            <person name="Zhang G."/>
            <person name="Zhao Q."/>
            <person name="Zheng L."/>
            <person name="Zheng X.H."/>
            <person name="Zhong F.N."/>
            <person name="Zhong W."/>
            <person name="Zhou X."/>
            <person name="Zhu S.C."/>
            <person name="Zhu X."/>
            <person name="Smith H.O."/>
            <person name="Gibbs R.A."/>
            <person name="Myers E.W."/>
            <person name="Rubin G.M."/>
            <person name="Venter J.C."/>
        </authorList>
    </citation>
    <scope>NUCLEOTIDE SEQUENCE [LARGE SCALE GENOMIC DNA]</scope>
    <source>
        <strain>Berkeley</strain>
    </source>
</reference>
<reference key="2">
    <citation type="journal article" date="2002" name="Genome Biol.">
        <title>Annotation of the Drosophila melanogaster euchromatic genome: a systematic review.</title>
        <authorList>
            <person name="Misra S."/>
            <person name="Crosby M.A."/>
            <person name="Mungall C.J."/>
            <person name="Matthews B.B."/>
            <person name="Campbell K.S."/>
            <person name="Hradecky P."/>
            <person name="Huang Y."/>
            <person name="Kaminker J.S."/>
            <person name="Millburn G.H."/>
            <person name="Prochnik S.E."/>
            <person name="Smith C.D."/>
            <person name="Tupy J.L."/>
            <person name="Whitfield E.J."/>
            <person name="Bayraktaroglu L."/>
            <person name="Berman B.P."/>
            <person name="Bettencourt B.R."/>
            <person name="Celniker S.E."/>
            <person name="de Grey A.D.N.J."/>
            <person name="Drysdale R.A."/>
            <person name="Harris N.L."/>
            <person name="Richter J."/>
            <person name="Russo S."/>
            <person name="Schroeder A.J."/>
            <person name="Shu S.Q."/>
            <person name="Stapleton M."/>
            <person name="Yamada C."/>
            <person name="Ashburner M."/>
            <person name="Gelbart W.M."/>
            <person name="Rubin G.M."/>
            <person name="Lewis S.E."/>
        </authorList>
    </citation>
    <scope>GENOME REANNOTATION</scope>
    <scope>ALTERNATIVE SPLICING</scope>
    <source>
        <strain>Berkeley</strain>
    </source>
</reference>
<reference key="3">
    <citation type="journal article" date="2002" name="Genome Biol.">
        <title>A Drosophila full-length cDNA resource.</title>
        <authorList>
            <person name="Stapleton M."/>
            <person name="Carlson J.W."/>
            <person name="Brokstein P."/>
            <person name="Yu C."/>
            <person name="Champe M."/>
            <person name="George R.A."/>
            <person name="Guarin H."/>
            <person name="Kronmiller B."/>
            <person name="Pacleb J.M."/>
            <person name="Park S."/>
            <person name="Wan K.H."/>
            <person name="Rubin G.M."/>
            <person name="Celniker S.E."/>
        </authorList>
    </citation>
    <scope>NUCLEOTIDE SEQUENCE [LARGE SCALE MRNA] (ISOFORMS A AND B)</scope>
    <source>
        <strain>Berkeley</strain>
        <tissue>Embryo</tissue>
    </source>
</reference>
<reference key="4">
    <citation type="journal article" date="2005" name="Development">
        <title>Loss of Drosophila borealin causes polyploidy, delayed apoptosis and abnormal tissue development.</title>
        <authorList>
            <person name="Hanson K.K."/>
            <person name="Kelley A.C."/>
            <person name="Bienz M."/>
        </authorList>
    </citation>
    <scope>FUNCTION</scope>
    <scope>MEMBER OF THE CPC COMPLEX</scope>
    <scope>SUBCELLULAR LOCATION</scope>
    <scope>DISRUPTION PHENOTYPE</scope>
</reference>
<reference key="5">
    <citation type="journal article" date="2008" name="J. Proteome Res.">
        <title>Phosphoproteome analysis of Drosophila melanogaster embryos.</title>
        <authorList>
            <person name="Zhai B."/>
            <person name="Villen J."/>
            <person name="Beausoleil S.A."/>
            <person name="Mintseris J."/>
            <person name="Gygi S.P."/>
        </authorList>
    </citation>
    <scope>PHOSPHORYLATION [LARGE SCALE ANALYSIS] AT THR-146; SER-152; SER-163; SER-205; THR-209; SER-218; SER-220 AND SER-244</scope>
    <scope>IDENTIFICATION BY MASS SPECTROMETRY</scope>
    <source>
        <tissue>Embryo</tissue>
    </source>
</reference>
<sequence>MPRTKIPKNSKRNREVANREEKVRLYELKMDSRLISIDSLETKFLSAVDHQVKTLLGQVQKELANLKMPEVLRLFEELDRFSDFKASDQTQLLASMSMSGSAIEGHAPSATGSRNDEEDSSIGASGGSILAAHTGSLLRSTKAMRTPGPLHSARARRARRSRSACGDLNILHSAKPPSISSSSSSSRNSRSKLRTPMASRAKAFSADRTPLKQKQMRSGSPTTPPMAFLRYPKPGEVALSKYGSPMVAQVMPDKFANVNIPIRNGVLSLRPKKLDADEVESNLLENLDEDTLNQIKTLHENLQMIVNKASQAVFK</sequence>
<dbReference type="EMBL" id="AE014134">
    <property type="protein sequence ID" value="AAF52757.1"/>
    <property type="molecule type" value="Genomic_DNA"/>
</dbReference>
<dbReference type="EMBL" id="AE014134">
    <property type="protein sequence ID" value="AAN10690.1"/>
    <property type="molecule type" value="Genomic_DNA"/>
</dbReference>
<dbReference type="EMBL" id="AY061432">
    <property type="protein sequence ID" value="AAL28980.1"/>
    <property type="molecule type" value="mRNA"/>
</dbReference>
<dbReference type="EMBL" id="BT001609">
    <property type="protein sequence ID" value="AAN71364.1"/>
    <property type="molecule type" value="mRNA"/>
</dbReference>
<dbReference type="RefSeq" id="NP_609279.1">
    <molecule id="Q9VLD6-1"/>
    <property type="nucleotide sequence ID" value="NM_135435.5"/>
</dbReference>
<dbReference type="RefSeq" id="NP_723450.1">
    <molecule id="Q9VLD6-2"/>
    <property type="nucleotide sequence ID" value="NM_164850.4"/>
</dbReference>
<dbReference type="SMR" id="Q9VLD6"/>
<dbReference type="BioGRID" id="60352">
    <property type="interactions" value="19"/>
</dbReference>
<dbReference type="ComplexPortal" id="CPX-8069">
    <property type="entry name" value="Chromosomal passenger complex, mitotic variant"/>
</dbReference>
<dbReference type="FunCoup" id="Q9VLD6">
    <property type="interactions" value="28"/>
</dbReference>
<dbReference type="IntAct" id="Q9VLD6">
    <property type="interactions" value="9"/>
</dbReference>
<dbReference type="STRING" id="7227.FBpp0079417"/>
<dbReference type="iPTMnet" id="Q9VLD6"/>
<dbReference type="PaxDb" id="7227-FBpp0079417"/>
<dbReference type="DNASU" id="34245"/>
<dbReference type="EnsemblMetazoa" id="FBtr0079817">
    <molecule id="Q9VLD6-1"/>
    <property type="protein sequence ID" value="FBpp0079416"/>
    <property type="gene ID" value="FBgn0032105"/>
</dbReference>
<dbReference type="EnsemblMetazoa" id="FBtr0079818">
    <molecule id="Q9VLD6-2"/>
    <property type="protein sequence ID" value="FBpp0079417"/>
    <property type="gene ID" value="FBgn0032105"/>
</dbReference>
<dbReference type="GeneID" id="34245"/>
<dbReference type="KEGG" id="dme:Dmel_CG4454"/>
<dbReference type="UCSC" id="CG4454-RA">
    <molecule id="Q9VLD6-1"/>
    <property type="organism name" value="d. melanogaster"/>
</dbReference>
<dbReference type="AGR" id="FB:FBgn0032105"/>
<dbReference type="CTD" id="34245"/>
<dbReference type="FlyBase" id="FBgn0032105">
    <property type="gene designation" value="borr"/>
</dbReference>
<dbReference type="VEuPathDB" id="VectorBase:FBgn0032105"/>
<dbReference type="eggNOG" id="ENOG502SAXQ">
    <property type="taxonomic scope" value="Eukaryota"/>
</dbReference>
<dbReference type="InParanoid" id="Q9VLD6"/>
<dbReference type="OMA" id="HENLQLI"/>
<dbReference type="OrthoDB" id="6360905at2759"/>
<dbReference type="PhylomeDB" id="Q9VLD6"/>
<dbReference type="Reactome" id="R-DME-4615885">
    <property type="pathway name" value="SUMOylation of DNA replication proteins"/>
</dbReference>
<dbReference type="SignaLink" id="Q9VLD6"/>
<dbReference type="BioGRID-ORCS" id="34245">
    <property type="hits" value="0 hits in 1 CRISPR screen"/>
</dbReference>
<dbReference type="GenomeRNAi" id="34245"/>
<dbReference type="PRO" id="PR:Q9VLD6"/>
<dbReference type="Proteomes" id="UP000000803">
    <property type="component" value="Chromosome 2L"/>
</dbReference>
<dbReference type="Bgee" id="FBgn0032105">
    <property type="expression patterns" value="Expressed in ovary and 43 other cell types or tissues"/>
</dbReference>
<dbReference type="GO" id="GO:0005938">
    <property type="term" value="C:cell cortex"/>
    <property type="evidence" value="ECO:0000314"/>
    <property type="project" value="UniProtKB"/>
</dbReference>
<dbReference type="GO" id="GO:0000785">
    <property type="term" value="C:chromatin"/>
    <property type="evidence" value="ECO:0000314"/>
    <property type="project" value="UniProtKB"/>
</dbReference>
<dbReference type="GO" id="GO:0032133">
    <property type="term" value="C:chromosome passenger complex"/>
    <property type="evidence" value="ECO:0000314"/>
    <property type="project" value="FlyBase"/>
</dbReference>
<dbReference type="GO" id="GO:0000775">
    <property type="term" value="C:chromosome, centromeric region"/>
    <property type="evidence" value="ECO:0000318"/>
    <property type="project" value="GO_Central"/>
</dbReference>
<dbReference type="GO" id="GO:0000776">
    <property type="term" value="C:kinetochore"/>
    <property type="evidence" value="ECO:0000314"/>
    <property type="project" value="FlyBase"/>
</dbReference>
<dbReference type="GO" id="GO:1990385">
    <property type="term" value="C:meiotic spindle midzone"/>
    <property type="evidence" value="ECO:0000314"/>
    <property type="project" value="FlyBase"/>
</dbReference>
<dbReference type="GO" id="GO:0005634">
    <property type="term" value="C:nucleus"/>
    <property type="evidence" value="ECO:0007669"/>
    <property type="project" value="UniProtKB-SubCell"/>
</dbReference>
<dbReference type="GO" id="GO:0051233">
    <property type="term" value="C:spindle midzone"/>
    <property type="evidence" value="ECO:0000314"/>
    <property type="project" value="UniProtKB"/>
</dbReference>
<dbReference type="GO" id="GO:0003677">
    <property type="term" value="F:DNA binding"/>
    <property type="evidence" value="ECO:0000314"/>
    <property type="project" value="FlyBase"/>
</dbReference>
<dbReference type="GO" id="GO:0051301">
    <property type="term" value="P:cell division"/>
    <property type="evidence" value="ECO:0007669"/>
    <property type="project" value="UniProtKB-KW"/>
</dbReference>
<dbReference type="GO" id="GO:0000070">
    <property type="term" value="P:mitotic sister chromatid segregation"/>
    <property type="evidence" value="ECO:0000315"/>
    <property type="project" value="UniProtKB"/>
</dbReference>
<dbReference type="GO" id="GO:1902889">
    <property type="term" value="P:protein localization to spindle microtubule"/>
    <property type="evidence" value="ECO:0000315"/>
    <property type="project" value="UniProtKB"/>
</dbReference>
<dbReference type="InterPro" id="IPR046466">
    <property type="entry name" value="Borealin_C"/>
</dbReference>
<dbReference type="InterPro" id="IPR018867">
    <property type="entry name" value="Cell_div_borealin"/>
</dbReference>
<dbReference type="PANTHER" id="PTHR16040">
    <property type="entry name" value="AUSTRALIN, ISOFORM A-RELATED"/>
    <property type="match status" value="1"/>
</dbReference>
<dbReference type="PANTHER" id="PTHR16040:SF7">
    <property type="entry name" value="AUSTRALIN, ISOFORM A-RELATED"/>
    <property type="match status" value="1"/>
</dbReference>
<dbReference type="Pfam" id="PF10512">
    <property type="entry name" value="Borealin"/>
    <property type="match status" value="1"/>
</dbReference>
<accession>Q9VLD6</accession>
<accession>Q8I0R3</accession>
<gene>
    <name type="primary">borr</name>
    <name type="ORF">CG4454</name>
</gene>
<organism>
    <name type="scientific">Drosophila melanogaster</name>
    <name type="common">Fruit fly</name>
    <dbReference type="NCBI Taxonomy" id="7227"/>
    <lineage>
        <taxon>Eukaryota</taxon>
        <taxon>Metazoa</taxon>
        <taxon>Ecdysozoa</taxon>
        <taxon>Arthropoda</taxon>
        <taxon>Hexapoda</taxon>
        <taxon>Insecta</taxon>
        <taxon>Pterygota</taxon>
        <taxon>Neoptera</taxon>
        <taxon>Endopterygota</taxon>
        <taxon>Diptera</taxon>
        <taxon>Brachycera</taxon>
        <taxon>Muscomorpha</taxon>
        <taxon>Ephydroidea</taxon>
        <taxon>Drosophilidae</taxon>
        <taxon>Drosophila</taxon>
        <taxon>Sophophora</taxon>
    </lineage>
</organism>